<organism>
    <name type="scientific">Methylobacillus flagellatus (strain ATCC 51484 / DSM 6875 / VKM B-1610 / KT)</name>
    <dbReference type="NCBI Taxonomy" id="265072"/>
    <lineage>
        <taxon>Bacteria</taxon>
        <taxon>Pseudomonadati</taxon>
        <taxon>Pseudomonadota</taxon>
        <taxon>Betaproteobacteria</taxon>
        <taxon>Nitrosomonadales</taxon>
        <taxon>Methylophilaceae</taxon>
        <taxon>Methylobacillus</taxon>
    </lineage>
</organism>
<feature type="chain" id="PRO_1000005956" description="DNA-directed RNA polymerase subunit omega">
    <location>
        <begin position="1"/>
        <end position="70"/>
    </location>
</feature>
<sequence length="70" mass="7591">MARITVDDCLEKIPNRFQLTLVAAYRARQLANGAEPLVNVHGSKDKPTVLALREIAAGKVGLEVLNRGHA</sequence>
<evidence type="ECO:0000255" key="1">
    <source>
        <dbReference type="HAMAP-Rule" id="MF_00366"/>
    </source>
</evidence>
<reference key="1">
    <citation type="submission" date="2006-03" db="EMBL/GenBank/DDBJ databases">
        <title>Complete sequence of Methylobacillus flagellatus KT.</title>
        <authorList>
            <consortium name="US DOE Joint Genome Institute"/>
            <person name="Copeland A."/>
            <person name="Lucas S."/>
            <person name="Lapidus A."/>
            <person name="Barry K."/>
            <person name="Detter J.C."/>
            <person name="Glavina del Rio T."/>
            <person name="Hammon N."/>
            <person name="Israni S."/>
            <person name="Dalin E."/>
            <person name="Tice H."/>
            <person name="Pitluck S."/>
            <person name="Brettin T."/>
            <person name="Bruce D."/>
            <person name="Han C."/>
            <person name="Tapia R."/>
            <person name="Saunders E."/>
            <person name="Gilna P."/>
            <person name="Schmutz J."/>
            <person name="Larimer F."/>
            <person name="Land M."/>
            <person name="Kyrpides N."/>
            <person name="Anderson I."/>
            <person name="Richardson P."/>
        </authorList>
    </citation>
    <scope>NUCLEOTIDE SEQUENCE [LARGE SCALE GENOMIC DNA]</scope>
    <source>
        <strain>ATCC 51484 / DSM 6875 / VKM B-1610 / KT</strain>
    </source>
</reference>
<keyword id="KW-0240">DNA-directed RNA polymerase</keyword>
<keyword id="KW-0548">Nucleotidyltransferase</keyword>
<keyword id="KW-1185">Reference proteome</keyword>
<keyword id="KW-0804">Transcription</keyword>
<keyword id="KW-0808">Transferase</keyword>
<accession>Q1GXB8</accession>
<name>RPOZ_METFK</name>
<protein>
    <recommendedName>
        <fullName evidence="1">DNA-directed RNA polymerase subunit omega</fullName>
        <shortName evidence="1">RNAP omega subunit</shortName>
        <ecNumber evidence="1">2.7.7.6</ecNumber>
    </recommendedName>
    <alternativeName>
        <fullName evidence="1">RNA polymerase omega subunit</fullName>
    </alternativeName>
    <alternativeName>
        <fullName evidence="1">Transcriptase subunit omega</fullName>
    </alternativeName>
</protein>
<comment type="function">
    <text evidence="1">Promotes RNA polymerase assembly. Latches the N- and C-terminal regions of the beta' subunit thereby facilitating its interaction with the beta and alpha subunits.</text>
</comment>
<comment type="catalytic activity">
    <reaction evidence="1">
        <text>RNA(n) + a ribonucleoside 5'-triphosphate = RNA(n+1) + diphosphate</text>
        <dbReference type="Rhea" id="RHEA:21248"/>
        <dbReference type="Rhea" id="RHEA-COMP:14527"/>
        <dbReference type="Rhea" id="RHEA-COMP:17342"/>
        <dbReference type="ChEBI" id="CHEBI:33019"/>
        <dbReference type="ChEBI" id="CHEBI:61557"/>
        <dbReference type="ChEBI" id="CHEBI:140395"/>
        <dbReference type="EC" id="2.7.7.6"/>
    </reaction>
</comment>
<comment type="subunit">
    <text evidence="1">The RNAP catalytic core consists of 2 alpha, 1 beta, 1 beta' and 1 omega subunit. When a sigma factor is associated with the core the holoenzyme is formed, which can initiate transcription.</text>
</comment>
<comment type="similarity">
    <text evidence="1">Belongs to the RNA polymerase subunit omega family.</text>
</comment>
<proteinExistence type="inferred from homology"/>
<gene>
    <name evidence="1" type="primary">rpoZ</name>
    <name type="ordered locus">Mfla_0049</name>
</gene>
<dbReference type="EC" id="2.7.7.6" evidence="1"/>
<dbReference type="EMBL" id="CP000284">
    <property type="protein sequence ID" value="ABE48320.1"/>
    <property type="molecule type" value="Genomic_DNA"/>
</dbReference>
<dbReference type="RefSeq" id="WP_011478417.1">
    <property type="nucleotide sequence ID" value="NC_007947.1"/>
</dbReference>
<dbReference type="SMR" id="Q1GXB8"/>
<dbReference type="STRING" id="265072.Mfla_0049"/>
<dbReference type="KEGG" id="mfa:Mfla_0049"/>
<dbReference type="eggNOG" id="COG1758">
    <property type="taxonomic scope" value="Bacteria"/>
</dbReference>
<dbReference type="HOGENOM" id="CLU_125406_5_2_4"/>
<dbReference type="OrthoDB" id="9796300at2"/>
<dbReference type="Proteomes" id="UP000002440">
    <property type="component" value="Chromosome"/>
</dbReference>
<dbReference type="GO" id="GO:0000428">
    <property type="term" value="C:DNA-directed RNA polymerase complex"/>
    <property type="evidence" value="ECO:0007669"/>
    <property type="project" value="UniProtKB-KW"/>
</dbReference>
<dbReference type="GO" id="GO:0003677">
    <property type="term" value="F:DNA binding"/>
    <property type="evidence" value="ECO:0007669"/>
    <property type="project" value="UniProtKB-UniRule"/>
</dbReference>
<dbReference type="GO" id="GO:0003899">
    <property type="term" value="F:DNA-directed RNA polymerase activity"/>
    <property type="evidence" value="ECO:0007669"/>
    <property type="project" value="UniProtKB-UniRule"/>
</dbReference>
<dbReference type="GO" id="GO:0006351">
    <property type="term" value="P:DNA-templated transcription"/>
    <property type="evidence" value="ECO:0007669"/>
    <property type="project" value="UniProtKB-UniRule"/>
</dbReference>
<dbReference type="Gene3D" id="3.90.940.10">
    <property type="match status" value="1"/>
</dbReference>
<dbReference type="HAMAP" id="MF_00366">
    <property type="entry name" value="RNApol_bact_RpoZ"/>
    <property type="match status" value="1"/>
</dbReference>
<dbReference type="InterPro" id="IPR003716">
    <property type="entry name" value="DNA-dir_RNA_pol_omega"/>
</dbReference>
<dbReference type="InterPro" id="IPR006110">
    <property type="entry name" value="Pol_omega/Rpo6/RPB6"/>
</dbReference>
<dbReference type="InterPro" id="IPR036161">
    <property type="entry name" value="RPB6/omega-like_sf"/>
</dbReference>
<dbReference type="NCBIfam" id="TIGR00690">
    <property type="entry name" value="rpoZ"/>
    <property type="match status" value="1"/>
</dbReference>
<dbReference type="PANTHER" id="PTHR34476">
    <property type="entry name" value="DNA-DIRECTED RNA POLYMERASE SUBUNIT OMEGA"/>
    <property type="match status" value="1"/>
</dbReference>
<dbReference type="PANTHER" id="PTHR34476:SF1">
    <property type="entry name" value="DNA-DIRECTED RNA POLYMERASE SUBUNIT OMEGA"/>
    <property type="match status" value="1"/>
</dbReference>
<dbReference type="Pfam" id="PF01192">
    <property type="entry name" value="RNA_pol_Rpb6"/>
    <property type="match status" value="1"/>
</dbReference>
<dbReference type="SMART" id="SM01409">
    <property type="entry name" value="RNA_pol_Rpb6"/>
    <property type="match status" value="1"/>
</dbReference>
<dbReference type="SUPFAM" id="SSF63562">
    <property type="entry name" value="RPB6/omega subunit-like"/>
    <property type="match status" value="1"/>
</dbReference>